<protein>
    <recommendedName>
        <fullName evidence="1">Polyribonucleotide nucleotidyltransferase</fullName>
        <ecNumber evidence="1">2.7.7.8</ecNumber>
    </recommendedName>
    <alternativeName>
        <fullName evidence="1">Polynucleotide phosphorylase</fullName>
        <shortName evidence="1">PNPase</shortName>
    </alternativeName>
</protein>
<evidence type="ECO:0000255" key="1">
    <source>
        <dbReference type="HAMAP-Rule" id="MF_01595"/>
    </source>
</evidence>
<evidence type="ECO:0000256" key="2">
    <source>
        <dbReference type="SAM" id="MobiDB-lite"/>
    </source>
</evidence>
<reference key="1">
    <citation type="journal article" date="2006" name="Environ. Microbiol.">
        <title>Whole genome analysis of the marine Bacteroidetes'Gramella forsetii' reveals adaptations to degradation of polymeric organic matter.</title>
        <authorList>
            <person name="Bauer M."/>
            <person name="Kube M."/>
            <person name="Teeling H."/>
            <person name="Richter M."/>
            <person name="Lombardot T."/>
            <person name="Allers E."/>
            <person name="Wuerdemann C.A."/>
            <person name="Quast C."/>
            <person name="Kuhl H."/>
            <person name="Knaust F."/>
            <person name="Woebken D."/>
            <person name="Bischof K."/>
            <person name="Mussmann M."/>
            <person name="Choudhuri J.V."/>
            <person name="Meyer F."/>
            <person name="Reinhardt R."/>
            <person name="Amann R.I."/>
            <person name="Gloeckner F.O."/>
        </authorList>
    </citation>
    <scope>NUCLEOTIDE SEQUENCE [LARGE SCALE GENOMIC DNA]</scope>
    <source>
        <strain>DSM 17595 / CGMCC 1.15422 / KT0803</strain>
    </source>
</reference>
<comment type="function">
    <text evidence="1">Involved in mRNA degradation. Catalyzes the phosphorolysis of single-stranded polyribonucleotides processively in the 3'- to 5'-direction.</text>
</comment>
<comment type="catalytic activity">
    <reaction evidence="1">
        <text>RNA(n+1) + phosphate = RNA(n) + a ribonucleoside 5'-diphosphate</text>
        <dbReference type="Rhea" id="RHEA:22096"/>
        <dbReference type="Rhea" id="RHEA-COMP:14527"/>
        <dbReference type="Rhea" id="RHEA-COMP:17342"/>
        <dbReference type="ChEBI" id="CHEBI:43474"/>
        <dbReference type="ChEBI" id="CHEBI:57930"/>
        <dbReference type="ChEBI" id="CHEBI:140395"/>
        <dbReference type="EC" id="2.7.7.8"/>
    </reaction>
</comment>
<comment type="cofactor">
    <cofactor evidence="1">
        <name>Mg(2+)</name>
        <dbReference type="ChEBI" id="CHEBI:18420"/>
    </cofactor>
</comment>
<comment type="subcellular location">
    <subcellularLocation>
        <location evidence="1">Cytoplasm</location>
    </subcellularLocation>
</comment>
<comment type="similarity">
    <text evidence="1">Belongs to the polyribonucleotide nucleotidyltransferase family.</text>
</comment>
<accession>A0LYC0</accession>
<dbReference type="EC" id="2.7.7.8" evidence="1"/>
<dbReference type="EMBL" id="CU207366">
    <property type="protein sequence ID" value="CAL65365.1"/>
    <property type="molecule type" value="Genomic_DNA"/>
</dbReference>
<dbReference type="RefSeq" id="WP_011708303.1">
    <property type="nucleotide sequence ID" value="NC_008571.1"/>
</dbReference>
<dbReference type="SMR" id="A0LYC0"/>
<dbReference type="STRING" id="411154.GFO_0380"/>
<dbReference type="KEGG" id="gfo:GFO_0380"/>
<dbReference type="eggNOG" id="COG1185">
    <property type="taxonomic scope" value="Bacteria"/>
</dbReference>
<dbReference type="HOGENOM" id="CLU_004217_2_2_10"/>
<dbReference type="OrthoDB" id="9804305at2"/>
<dbReference type="Proteomes" id="UP000000755">
    <property type="component" value="Chromosome"/>
</dbReference>
<dbReference type="GO" id="GO:0005829">
    <property type="term" value="C:cytosol"/>
    <property type="evidence" value="ECO:0007669"/>
    <property type="project" value="TreeGrafter"/>
</dbReference>
<dbReference type="GO" id="GO:0000175">
    <property type="term" value="F:3'-5'-RNA exonuclease activity"/>
    <property type="evidence" value="ECO:0007669"/>
    <property type="project" value="TreeGrafter"/>
</dbReference>
<dbReference type="GO" id="GO:0000287">
    <property type="term" value="F:magnesium ion binding"/>
    <property type="evidence" value="ECO:0007669"/>
    <property type="project" value="UniProtKB-UniRule"/>
</dbReference>
<dbReference type="GO" id="GO:0004654">
    <property type="term" value="F:polyribonucleotide nucleotidyltransferase activity"/>
    <property type="evidence" value="ECO:0007669"/>
    <property type="project" value="UniProtKB-UniRule"/>
</dbReference>
<dbReference type="GO" id="GO:0003723">
    <property type="term" value="F:RNA binding"/>
    <property type="evidence" value="ECO:0007669"/>
    <property type="project" value="UniProtKB-UniRule"/>
</dbReference>
<dbReference type="GO" id="GO:0006402">
    <property type="term" value="P:mRNA catabolic process"/>
    <property type="evidence" value="ECO:0007669"/>
    <property type="project" value="UniProtKB-UniRule"/>
</dbReference>
<dbReference type="GO" id="GO:0006396">
    <property type="term" value="P:RNA processing"/>
    <property type="evidence" value="ECO:0007669"/>
    <property type="project" value="InterPro"/>
</dbReference>
<dbReference type="CDD" id="cd02393">
    <property type="entry name" value="KH-I_PNPase"/>
    <property type="match status" value="1"/>
</dbReference>
<dbReference type="CDD" id="cd11364">
    <property type="entry name" value="RNase_PH_PNPase_2"/>
    <property type="match status" value="1"/>
</dbReference>
<dbReference type="FunFam" id="3.30.1370.10:FF:000001">
    <property type="entry name" value="Polyribonucleotide nucleotidyltransferase"/>
    <property type="match status" value="1"/>
</dbReference>
<dbReference type="FunFam" id="3.30.230.70:FF:000001">
    <property type="entry name" value="Polyribonucleotide nucleotidyltransferase"/>
    <property type="match status" value="1"/>
</dbReference>
<dbReference type="FunFam" id="3.30.230.70:FF:000002">
    <property type="entry name" value="Polyribonucleotide nucleotidyltransferase"/>
    <property type="match status" value="1"/>
</dbReference>
<dbReference type="Gene3D" id="3.30.230.70">
    <property type="entry name" value="GHMP Kinase, N-terminal domain"/>
    <property type="match status" value="2"/>
</dbReference>
<dbReference type="Gene3D" id="3.30.1370.10">
    <property type="entry name" value="K Homology domain, type 1"/>
    <property type="match status" value="1"/>
</dbReference>
<dbReference type="Gene3D" id="2.40.50.140">
    <property type="entry name" value="Nucleic acid-binding proteins"/>
    <property type="match status" value="1"/>
</dbReference>
<dbReference type="HAMAP" id="MF_01595">
    <property type="entry name" value="PNPase"/>
    <property type="match status" value="1"/>
</dbReference>
<dbReference type="InterPro" id="IPR001247">
    <property type="entry name" value="ExoRNase_PH_dom1"/>
</dbReference>
<dbReference type="InterPro" id="IPR015847">
    <property type="entry name" value="ExoRNase_PH_dom2"/>
</dbReference>
<dbReference type="InterPro" id="IPR036345">
    <property type="entry name" value="ExoRNase_PH_dom2_sf"/>
</dbReference>
<dbReference type="InterPro" id="IPR004087">
    <property type="entry name" value="KH_dom"/>
</dbReference>
<dbReference type="InterPro" id="IPR004088">
    <property type="entry name" value="KH_dom_type_1"/>
</dbReference>
<dbReference type="InterPro" id="IPR036612">
    <property type="entry name" value="KH_dom_type_1_sf"/>
</dbReference>
<dbReference type="InterPro" id="IPR012340">
    <property type="entry name" value="NA-bd_OB-fold"/>
</dbReference>
<dbReference type="InterPro" id="IPR012162">
    <property type="entry name" value="PNPase"/>
</dbReference>
<dbReference type="InterPro" id="IPR027408">
    <property type="entry name" value="PNPase/RNase_PH_dom_sf"/>
</dbReference>
<dbReference type="InterPro" id="IPR015848">
    <property type="entry name" value="PNPase_PH_RNA-bd_bac/org-type"/>
</dbReference>
<dbReference type="InterPro" id="IPR020568">
    <property type="entry name" value="Ribosomal_Su5_D2-typ_SF"/>
</dbReference>
<dbReference type="InterPro" id="IPR003029">
    <property type="entry name" value="S1_domain"/>
</dbReference>
<dbReference type="NCBIfam" id="TIGR03591">
    <property type="entry name" value="polynuc_phos"/>
    <property type="match status" value="1"/>
</dbReference>
<dbReference type="NCBIfam" id="NF008805">
    <property type="entry name" value="PRK11824.1"/>
    <property type="match status" value="1"/>
</dbReference>
<dbReference type="PANTHER" id="PTHR11252">
    <property type="entry name" value="POLYRIBONUCLEOTIDE NUCLEOTIDYLTRANSFERASE"/>
    <property type="match status" value="1"/>
</dbReference>
<dbReference type="PANTHER" id="PTHR11252:SF0">
    <property type="entry name" value="POLYRIBONUCLEOTIDE NUCLEOTIDYLTRANSFERASE 1, MITOCHONDRIAL"/>
    <property type="match status" value="1"/>
</dbReference>
<dbReference type="Pfam" id="PF00013">
    <property type="entry name" value="KH_1"/>
    <property type="match status" value="1"/>
</dbReference>
<dbReference type="Pfam" id="PF03726">
    <property type="entry name" value="PNPase"/>
    <property type="match status" value="1"/>
</dbReference>
<dbReference type="Pfam" id="PF01138">
    <property type="entry name" value="RNase_PH"/>
    <property type="match status" value="2"/>
</dbReference>
<dbReference type="Pfam" id="PF03725">
    <property type="entry name" value="RNase_PH_C"/>
    <property type="match status" value="2"/>
</dbReference>
<dbReference type="Pfam" id="PF00575">
    <property type="entry name" value="S1"/>
    <property type="match status" value="1"/>
</dbReference>
<dbReference type="PIRSF" id="PIRSF005499">
    <property type="entry name" value="PNPase"/>
    <property type="match status" value="1"/>
</dbReference>
<dbReference type="SMART" id="SM00322">
    <property type="entry name" value="KH"/>
    <property type="match status" value="1"/>
</dbReference>
<dbReference type="SMART" id="SM00316">
    <property type="entry name" value="S1"/>
    <property type="match status" value="1"/>
</dbReference>
<dbReference type="SUPFAM" id="SSF54791">
    <property type="entry name" value="Eukaryotic type KH-domain (KH-domain type I)"/>
    <property type="match status" value="1"/>
</dbReference>
<dbReference type="SUPFAM" id="SSF50249">
    <property type="entry name" value="Nucleic acid-binding proteins"/>
    <property type="match status" value="1"/>
</dbReference>
<dbReference type="SUPFAM" id="SSF55666">
    <property type="entry name" value="Ribonuclease PH domain 2-like"/>
    <property type="match status" value="2"/>
</dbReference>
<dbReference type="SUPFAM" id="SSF54211">
    <property type="entry name" value="Ribosomal protein S5 domain 2-like"/>
    <property type="match status" value="2"/>
</dbReference>
<dbReference type="PROSITE" id="PS50084">
    <property type="entry name" value="KH_TYPE_1"/>
    <property type="match status" value="1"/>
</dbReference>
<dbReference type="PROSITE" id="PS50126">
    <property type="entry name" value="S1"/>
    <property type="match status" value="1"/>
</dbReference>
<organism>
    <name type="scientific">Christiangramia forsetii (strain DSM 17595 / CGMCC 1.15422 / KT0803)</name>
    <name type="common">Gramella forsetii</name>
    <dbReference type="NCBI Taxonomy" id="411154"/>
    <lineage>
        <taxon>Bacteria</taxon>
        <taxon>Pseudomonadati</taxon>
        <taxon>Bacteroidota</taxon>
        <taxon>Flavobacteriia</taxon>
        <taxon>Flavobacteriales</taxon>
        <taxon>Flavobacteriaceae</taxon>
        <taxon>Christiangramia</taxon>
    </lineage>
</organism>
<feature type="chain" id="PRO_0000329667" description="Polyribonucleotide nucleotidyltransferase">
    <location>
        <begin position="1"/>
        <end position="750"/>
    </location>
</feature>
<feature type="domain" description="KH" evidence="1">
    <location>
        <begin position="556"/>
        <end position="620"/>
    </location>
</feature>
<feature type="domain" description="S1 motif" evidence="1">
    <location>
        <begin position="630"/>
        <end position="701"/>
    </location>
</feature>
<feature type="region of interest" description="Disordered" evidence="2">
    <location>
        <begin position="697"/>
        <end position="750"/>
    </location>
</feature>
<feature type="compositionally biased region" description="Basic and acidic residues" evidence="2">
    <location>
        <begin position="702"/>
        <end position="750"/>
    </location>
</feature>
<feature type="binding site" evidence="1">
    <location>
        <position position="489"/>
    </location>
    <ligand>
        <name>Mg(2+)</name>
        <dbReference type="ChEBI" id="CHEBI:18420"/>
    </ligand>
</feature>
<feature type="binding site" evidence="1">
    <location>
        <position position="495"/>
    </location>
    <ligand>
        <name>Mg(2+)</name>
        <dbReference type="ChEBI" id="CHEBI:18420"/>
    </ligand>
</feature>
<sequence length="750" mass="83306">MIPKTFKEVIDLGDGREISIETGKLAKQAHGSVVVQSGKCMLLCTVVSNYEQKDLPFLPLTVDYREKFAAAGRYPGGFFKREARPSDGEVLTMRLVDRVLRPLFPKDYSAETQVMIQLMSHDDEVMPEAMAGLAASAAIQLSDFPFECAISEARVGRVNGEFIINPTRAQLAESDIEMMIGASADSVMMVEGEMDEISEEDMVEAIKFAHEAIKVQIEAQHRLADAFGRKEVREYEDAPENEDLVKKVHDMAYDKVYAVAKAGSSKKERTDAFASIKEEVKASFSEEELEEYGDLVSDYYRKAEKAAVRDLTLNEGIRLDGRKTDEVRDIWCEVDYLPSVHGSSIFTRGETQALATVTLGTSRDANQIDMPSHEGEERFYLHYNFPPFCTGEARPIRGTSRREVGHGNLAQRALKGMIPEECPYTVRVVSEVLESNGSSSMATVCAGTMALMDAGVQMKKPVSGIAMGLISDGDSGKYAVLSDILGDEDHLGDMDFKVTGTADGITACQMDIKVKGLSYEILVNALKQARDGRLHILEKLTDTIAQPNADVKAYAPKMITRRIPNEFIGALIGPGGKVIQELQKETGTTIVINEDPVTEEGIIEILGTEQEGIDKVIAKIESITFKPEKGSVYEVKVIKVLDFGAVVEYMDAPGNEVLLHISELAWERTNDVNDVLKLGDVLDVKYFGLDPKTRKDKVSRKALMEKPEGYKERAPRDRDDKRGSRDNNRGRDNRGRDNRRDDRKPRENKD</sequence>
<gene>
    <name evidence="1" type="primary">pnp</name>
    <name type="ordered locus">GFO_0380</name>
</gene>
<keyword id="KW-0963">Cytoplasm</keyword>
<keyword id="KW-0460">Magnesium</keyword>
<keyword id="KW-0479">Metal-binding</keyword>
<keyword id="KW-0548">Nucleotidyltransferase</keyword>
<keyword id="KW-0694">RNA-binding</keyword>
<keyword id="KW-0808">Transferase</keyword>
<name>PNP_CHRFK</name>
<proteinExistence type="inferred from homology"/>